<protein>
    <recommendedName>
        <fullName evidence="1">Large ribosomal subunit protein uL30</fullName>
    </recommendedName>
    <alternativeName>
        <fullName evidence="2">50S ribosomal protein L30</fullName>
    </alternativeName>
</protein>
<gene>
    <name evidence="1" type="primary">rpl30</name>
    <name type="ordered locus">MA_1093</name>
</gene>
<feature type="chain" id="PRO_0000273905" description="Large ribosomal subunit protein uL30">
    <location>
        <begin position="1"/>
        <end position="153"/>
    </location>
</feature>
<sequence length="153" mass="17594">MYAVVRLRGQVNVRYTIEDTMKMLRLHKVNHCVFVPENPHYKGMVQKVKDYVAYGKIDAKTLAEVLENRGRLEGDTRLTEEYIRENTDYDSIQAFAEAVIEGKSSLKDIPKLKPVFRLHPPRKGHAGIKRTVQQGGVLGNHDENINVLLHKMR</sequence>
<dbReference type="EMBL" id="AE010299">
    <property type="protein sequence ID" value="AAM04518.1"/>
    <property type="molecule type" value="Genomic_DNA"/>
</dbReference>
<dbReference type="RefSeq" id="WP_011021122.1">
    <property type="nucleotide sequence ID" value="NC_003552.1"/>
</dbReference>
<dbReference type="SMR" id="Q8TRS6"/>
<dbReference type="FunCoup" id="Q8TRS6">
    <property type="interactions" value="158"/>
</dbReference>
<dbReference type="STRING" id="188937.MA_1093"/>
<dbReference type="EnsemblBacteria" id="AAM04518">
    <property type="protein sequence ID" value="AAM04518"/>
    <property type="gene ID" value="MA_1093"/>
</dbReference>
<dbReference type="GeneID" id="1472983"/>
<dbReference type="KEGG" id="mac:MA_1093"/>
<dbReference type="HOGENOM" id="CLU_055156_6_0_2"/>
<dbReference type="InParanoid" id="Q8TRS6"/>
<dbReference type="OrthoDB" id="6379at2157"/>
<dbReference type="PhylomeDB" id="Q8TRS6"/>
<dbReference type="Proteomes" id="UP000002487">
    <property type="component" value="Chromosome"/>
</dbReference>
<dbReference type="GO" id="GO:0022625">
    <property type="term" value="C:cytosolic large ribosomal subunit"/>
    <property type="evidence" value="ECO:0000318"/>
    <property type="project" value="GO_Central"/>
</dbReference>
<dbReference type="GO" id="GO:0003723">
    <property type="term" value="F:RNA binding"/>
    <property type="evidence" value="ECO:0000318"/>
    <property type="project" value="GO_Central"/>
</dbReference>
<dbReference type="GO" id="GO:0003735">
    <property type="term" value="F:structural constituent of ribosome"/>
    <property type="evidence" value="ECO:0000318"/>
    <property type="project" value="GO_Central"/>
</dbReference>
<dbReference type="GO" id="GO:0000463">
    <property type="term" value="P:maturation of LSU-rRNA from tricistronic rRNA transcript (SSU-rRNA, 5.8S rRNA, LSU-rRNA)"/>
    <property type="evidence" value="ECO:0000318"/>
    <property type="project" value="GO_Central"/>
</dbReference>
<dbReference type="GO" id="GO:0006412">
    <property type="term" value="P:translation"/>
    <property type="evidence" value="ECO:0007669"/>
    <property type="project" value="UniProtKB-UniRule"/>
</dbReference>
<dbReference type="CDD" id="cd01657">
    <property type="entry name" value="Ribosomal_L7_archeal_euk"/>
    <property type="match status" value="1"/>
</dbReference>
<dbReference type="FunFam" id="1.10.15.30:FF:000002">
    <property type="entry name" value="50S ribosomal protein L30"/>
    <property type="match status" value="1"/>
</dbReference>
<dbReference type="Gene3D" id="1.10.15.30">
    <property type="match status" value="1"/>
</dbReference>
<dbReference type="Gene3D" id="3.30.1390.20">
    <property type="entry name" value="Ribosomal protein L30, ferredoxin-like fold domain"/>
    <property type="match status" value="1"/>
</dbReference>
<dbReference type="HAMAP" id="MF_01371_A">
    <property type="entry name" value="Ribosomal_uL30_A"/>
    <property type="match status" value="1"/>
</dbReference>
<dbReference type="InterPro" id="IPR036919">
    <property type="entry name" value="Ribo_uL30_ferredoxin-like_sf"/>
</dbReference>
<dbReference type="InterPro" id="IPR039699">
    <property type="entry name" value="Ribosomal_uL30"/>
</dbReference>
<dbReference type="InterPro" id="IPR005997">
    <property type="entry name" value="Ribosomal_uL30_arc"/>
</dbReference>
<dbReference type="InterPro" id="IPR018038">
    <property type="entry name" value="Ribosomal_uL30_CS"/>
</dbReference>
<dbReference type="InterPro" id="IPR035808">
    <property type="entry name" value="Ribosomal_uL30_euk_arc"/>
</dbReference>
<dbReference type="InterPro" id="IPR016082">
    <property type="entry name" value="Ribosomal_uL30_ferredoxin-like"/>
</dbReference>
<dbReference type="NCBIfam" id="NF004711">
    <property type="entry name" value="PRK06049.1"/>
    <property type="match status" value="1"/>
</dbReference>
<dbReference type="NCBIfam" id="TIGR01309">
    <property type="entry name" value="uL30_arch"/>
    <property type="match status" value="1"/>
</dbReference>
<dbReference type="PANTHER" id="PTHR11524">
    <property type="entry name" value="60S RIBOSOMAL PROTEIN L7"/>
    <property type="match status" value="1"/>
</dbReference>
<dbReference type="PANTHER" id="PTHR11524:SF16">
    <property type="entry name" value="LARGE RIBOSOMAL SUBUNIT PROTEIN UL30"/>
    <property type="match status" value="1"/>
</dbReference>
<dbReference type="Pfam" id="PF00327">
    <property type="entry name" value="Ribosomal_L30"/>
    <property type="match status" value="1"/>
</dbReference>
<dbReference type="SUPFAM" id="SSF55129">
    <property type="entry name" value="Ribosomal protein L30p/L7e"/>
    <property type="match status" value="1"/>
</dbReference>
<dbReference type="PROSITE" id="PS00634">
    <property type="entry name" value="RIBOSOMAL_L30"/>
    <property type="match status" value="1"/>
</dbReference>
<reference key="1">
    <citation type="journal article" date="2002" name="Genome Res.">
        <title>The genome of Methanosarcina acetivorans reveals extensive metabolic and physiological diversity.</title>
        <authorList>
            <person name="Galagan J.E."/>
            <person name="Nusbaum C."/>
            <person name="Roy A."/>
            <person name="Endrizzi M.G."/>
            <person name="Macdonald P."/>
            <person name="FitzHugh W."/>
            <person name="Calvo S."/>
            <person name="Engels R."/>
            <person name="Smirnov S."/>
            <person name="Atnoor D."/>
            <person name="Brown A."/>
            <person name="Allen N."/>
            <person name="Naylor J."/>
            <person name="Stange-Thomann N."/>
            <person name="DeArellano K."/>
            <person name="Johnson R."/>
            <person name="Linton L."/>
            <person name="McEwan P."/>
            <person name="McKernan K."/>
            <person name="Talamas J."/>
            <person name="Tirrell A."/>
            <person name="Ye W."/>
            <person name="Zimmer A."/>
            <person name="Barber R.D."/>
            <person name="Cann I."/>
            <person name="Graham D.E."/>
            <person name="Grahame D.A."/>
            <person name="Guss A.M."/>
            <person name="Hedderich R."/>
            <person name="Ingram-Smith C."/>
            <person name="Kuettner H.C."/>
            <person name="Krzycki J.A."/>
            <person name="Leigh J.A."/>
            <person name="Li W."/>
            <person name="Liu J."/>
            <person name="Mukhopadhyay B."/>
            <person name="Reeve J.N."/>
            <person name="Smith K."/>
            <person name="Springer T.A."/>
            <person name="Umayam L.A."/>
            <person name="White O."/>
            <person name="White R.H."/>
            <person name="de Macario E.C."/>
            <person name="Ferry J.G."/>
            <person name="Jarrell K.F."/>
            <person name="Jing H."/>
            <person name="Macario A.J.L."/>
            <person name="Paulsen I.T."/>
            <person name="Pritchett M."/>
            <person name="Sowers K.R."/>
            <person name="Swanson R.V."/>
            <person name="Zinder S.H."/>
            <person name="Lander E."/>
            <person name="Metcalf W.W."/>
            <person name="Birren B."/>
        </authorList>
    </citation>
    <scope>NUCLEOTIDE SEQUENCE [LARGE SCALE GENOMIC DNA]</scope>
    <source>
        <strain>ATCC 35395 / DSM 2834 / JCM 12185 / C2A</strain>
    </source>
</reference>
<name>RL30_METAC</name>
<comment type="subunit">
    <text evidence="1">Part of the 50S ribosomal subunit.</text>
</comment>
<comment type="similarity">
    <text evidence="1">Belongs to the universal ribosomal protein uL30 family.</text>
</comment>
<proteinExistence type="inferred from homology"/>
<keyword id="KW-1185">Reference proteome</keyword>
<keyword id="KW-0687">Ribonucleoprotein</keyword>
<keyword id="KW-0689">Ribosomal protein</keyword>
<organism>
    <name type="scientific">Methanosarcina acetivorans (strain ATCC 35395 / DSM 2834 / JCM 12185 / C2A)</name>
    <dbReference type="NCBI Taxonomy" id="188937"/>
    <lineage>
        <taxon>Archaea</taxon>
        <taxon>Methanobacteriati</taxon>
        <taxon>Methanobacteriota</taxon>
        <taxon>Stenosarchaea group</taxon>
        <taxon>Methanomicrobia</taxon>
        <taxon>Methanosarcinales</taxon>
        <taxon>Methanosarcinaceae</taxon>
        <taxon>Methanosarcina</taxon>
    </lineage>
</organism>
<accession>Q8TRS6</accession>
<evidence type="ECO:0000255" key="1">
    <source>
        <dbReference type="HAMAP-Rule" id="MF_01371"/>
    </source>
</evidence>
<evidence type="ECO:0000305" key="2"/>